<comment type="function">
    <text evidence="3 4">Galactose-binding lectin. Plays a role in adhesion to the host cell. Has a potential role in invasion of host cells.</text>
</comment>
<comment type="subunit">
    <text evidence="4">Homodimer or heterodimer.</text>
</comment>
<comment type="subcellular location">
    <subcellularLocation>
        <location>Cytoplasmic vesicle</location>
        <location>Secretory vesicle</location>
        <location>Microneme</location>
    </subcellularLocation>
</comment>
<comment type="developmental stage">
    <text>Cyst merozoites.</text>
</comment>
<comment type="PTM">
    <text>Contains six disulfide bonds.</text>
</comment>
<comment type="mass spectrometry" mass="15066.0" method="Electrospray" evidence="2"/>
<comment type="similarity">
    <text evidence="5">Belongs to the microneme antigen family.</text>
</comment>
<evidence type="ECO:0000255" key="1">
    <source>
        <dbReference type="PROSITE-ProRule" id="PRU00315"/>
    </source>
</evidence>
<evidence type="ECO:0000269" key="2">
    <source>
    </source>
</evidence>
<evidence type="ECO:0000269" key="3">
    <source>
    </source>
</evidence>
<evidence type="ECO:0000269" key="4">
    <source>
    </source>
</evidence>
<evidence type="ECO:0000305" key="5"/>
<evidence type="ECO:0007829" key="6">
    <source>
        <dbReference type="PDB" id="2YIL"/>
    </source>
</evidence>
<proteinExistence type="evidence at protein level"/>
<accession>P81860</accession>
<accession>Q549G0</accession>
<name>MIA2_SARMU</name>
<keyword id="KW-0002">3D-structure</keyword>
<keyword id="KW-0130">Cell adhesion</keyword>
<keyword id="KW-0968">Cytoplasmic vesicle</keyword>
<keyword id="KW-0903">Direct protein sequencing</keyword>
<keyword id="KW-1015">Disulfide bond</keyword>
<keyword id="KW-0430">Lectin</keyword>
<keyword id="KW-0677">Repeat</keyword>
<dbReference type="EMBL" id="AF130977">
    <property type="protein sequence ID" value="AAF36512.1"/>
    <property type="molecule type" value="Genomic_DNA"/>
</dbReference>
<dbReference type="PDB" id="2YIL">
    <property type="method" value="X-ray"/>
    <property type="resolution" value="1.95 A"/>
    <property type="chains" value="A/B/C/D/E/F=1-138"/>
</dbReference>
<dbReference type="PDB" id="2YIO">
    <property type="method" value="X-ray"/>
    <property type="resolution" value="2.43 A"/>
    <property type="chains" value="A/B=1-138"/>
</dbReference>
<dbReference type="PDB" id="2YIP">
    <property type="method" value="X-ray"/>
    <property type="resolution" value="2.14 A"/>
    <property type="chains" value="A/B/C/D/E/F=1-138"/>
</dbReference>
<dbReference type="PDBsum" id="2YIL"/>
<dbReference type="PDBsum" id="2YIO"/>
<dbReference type="PDBsum" id="2YIP"/>
<dbReference type="SMR" id="P81860"/>
<dbReference type="UniLectin" id="P81860"/>
<dbReference type="EvolutionaryTrace" id="P81860"/>
<dbReference type="GO" id="GO:0031410">
    <property type="term" value="C:cytoplasmic vesicle"/>
    <property type="evidence" value="ECO:0007669"/>
    <property type="project" value="UniProtKB-KW"/>
</dbReference>
<dbReference type="GO" id="GO:0005576">
    <property type="term" value="C:extracellular region"/>
    <property type="evidence" value="ECO:0007669"/>
    <property type="project" value="InterPro"/>
</dbReference>
<dbReference type="GO" id="GO:0020009">
    <property type="term" value="C:microneme"/>
    <property type="evidence" value="ECO:0007669"/>
    <property type="project" value="UniProtKB-SubCell"/>
</dbReference>
<dbReference type="GO" id="GO:0030246">
    <property type="term" value="F:carbohydrate binding"/>
    <property type="evidence" value="ECO:0007669"/>
    <property type="project" value="UniProtKB-KW"/>
</dbReference>
<dbReference type="GO" id="GO:0007155">
    <property type="term" value="P:cell adhesion"/>
    <property type="evidence" value="ECO:0007669"/>
    <property type="project" value="UniProtKB-KW"/>
</dbReference>
<dbReference type="GO" id="GO:0006508">
    <property type="term" value="P:proteolysis"/>
    <property type="evidence" value="ECO:0007669"/>
    <property type="project" value="InterPro"/>
</dbReference>
<dbReference type="CDD" id="cd01100">
    <property type="entry name" value="APPLE_Factor_XI_like"/>
    <property type="match status" value="1"/>
</dbReference>
<dbReference type="Gene3D" id="3.30.30.180">
    <property type="match status" value="1"/>
</dbReference>
<dbReference type="Gene3D" id="3.50.4.10">
    <property type="entry name" value="Hepatocyte Growth Factor"/>
    <property type="match status" value="1"/>
</dbReference>
<dbReference type="InterPro" id="IPR000177">
    <property type="entry name" value="Apple"/>
</dbReference>
<dbReference type="InterPro" id="IPR003609">
    <property type="entry name" value="Pan_app"/>
</dbReference>
<dbReference type="Pfam" id="PF00024">
    <property type="entry name" value="PAN_1"/>
    <property type="match status" value="1"/>
</dbReference>
<dbReference type="Pfam" id="PF14295">
    <property type="entry name" value="PAN_4"/>
    <property type="match status" value="1"/>
</dbReference>
<dbReference type="SMART" id="SM00223">
    <property type="entry name" value="APPLE"/>
    <property type="match status" value="1"/>
</dbReference>
<dbReference type="SMART" id="SM00473">
    <property type="entry name" value="PAN_AP"/>
    <property type="match status" value="1"/>
</dbReference>
<dbReference type="SUPFAM" id="SSF57414">
    <property type="entry name" value="Hairpin loop containing domain-like"/>
    <property type="match status" value="1"/>
</dbReference>
<dbReference type="PROSITE" id="PS50948">
    <property type="entry name" value="PAN"/>
    <property type="match status" value="2"/>
</dbReference>
<reference key="1">
    <citation type="journal article" date="2001" name="Acta Crystallogr. D">
        <title>Characterization and crystallization of a novel Sarcocystis muris lectin, SML-2.</title>
        <authorList>
            <person name="Mueller J.J."/>
            <person name="Mueller E.-C."/>
            <person name="Montag T."/>
            <person name="Zyto N."/>
            <person name="Loeschner B."/>
            <person name="Klein H."/>
            <person name="Heineman U."/>
            <person name="Otto A."/>
        </authorList>
    </citation>
    <scope>PROTEIN SEQUENCE</scope>
    <scope>MASS SPECTROMETRY</scope>
    <scope>DISULFIDE BONDS</scope>
    <scope>CRYSTALLIZATION</scope>
</reference>
<reference key="2">
    <citation type="journal article" date="2003" name="Parasitol. Res.">
        <title>Cloning, sequencing and recombinant expression of the open reading frame encoding a novel member of the Sarcocystis muris (Apicomplexa) microneme lectin family.</title>
        <authorList>
            <person name="Klein H."/>
            <person name="Mueller S."/>
            <person name="Loeschner B."/>
            <person name="Toenjes R.R."/>
            <person name="Braun G."/>
            <person name="Mueller E.-C."/>
            <person name="Otto A."/>
            <person name="Montag T."/>
        </authorList>
    </citation>
    <scope>NUCLEOTIDE SEQUENCE [GENOMIC DNA]</scope>
    <scope>FUNCTION</scope>
</reference>
<reference key="3">
    <citation type="journal article" date="2011" name="Acta Crystallogr. D">
        <title>PAN-modular structure of microneme protein SML-2 from the parasite Sarcocystis muris at 1.95 A resolution and its complex with 1-thio-beta-D-galactose.</title>
        <authorList>
            <person name="Muller J.J."/>
            <person name="Weiss M.S."/>
            <person name="Heinemann U."/>
        </authorList>
    </citation>
    <scope>X-RAY CRYSTALLOGRAPHY (1.95 ANGSTROMS) IN COMPLEX WITH 1-THIO-BETA-D-GALACTOSE</scope>
    <scope>FUNCTION</scope>
    <scope>SUBUNIT</scope>
    <scope>DISULFIDE BONDS</scope>
</reference>
<sequence length="138" mass="15078">AGPQLDVSCFAHDKNIGSRTEQLSVVHVASAQDCMKECQALPTCSHFTYNKNSKKCHLKAGAPEFYTYTGDMTGPRSCEHNCSDACWMDGNNPLAVWDYSGQPPALCWAACMGTPGCDLYTFQGMTCKLYSQTSSKRA</sequence>
<organism>
    <name type="scientific">Sarcocystis muris</name>
    <dbReference type="NCBI Taxonomy" id="5813"/>
    <lineage>
        <taxon>Eukaryota</taxon>
        <taxon>Sar</taxon>
        <taxon>Alveolata</taxon>
        <taxon>Apicomplexa</taxon>
        <taxon>Conoidasida</taxon>
        <taxon>Coccidia</taxon>
        <taxon>Eucoccidiorida</taxon>
        <taxon>Eimeriorina</taxon>
        <taxon>Sarcocystidae</taxon>
        <taxon>Sarcocystis</taxon>
    </lineage>
</organism>
<feature type="chain" id="PRO_0000096479" description="Microneme antigen L2">
    <location>
        <begin position="1"/>
        <end position="138"/>
    </location>
</feature>
<feature type="domain" description="PAN 1" evidence="1">
    <location>
        <begin position="9"/>
        <end position="78"/>
    </location>
</feature>
<feature type="domain" description="PAN 2" evidence="1">
    <location>
        <begin position="82"/>
        <end position="138"/>
    </location>
</feature>
<feature type="binding site">
    <location>
        <position position="18"/>
    </location>
    <ligand>
        <name>a carbohydrate</name>
        <dbReference type="ChEBI" id="CHEBI:16646"/>
    </ligand>
</feature>
<feature type="binding site">
    <location>
        <position position="59"/>
    </location>
    <ligand>
        <name>a carbohydrate</name>
        <dbReference type="ChEBI" id="CHEBI:16646"/>
    </ligand>
</feature>
<feature type="binding site">
    <location>
        <position position="66"/>
    </location>
    <ligand>
        <name>a carbohydrate</name>
        <dbReference type="ChEBI" id="CHEBI:16646"/>
    </ligand>
</feature>
<feature type="binding site">
    <location>
        <position position="71"/>
    </location>
    <ligand>
        <name>a carbohydrate</name>
        <dbReference type="ChEBI" id="CHEBI:16646"/>
    </ligand>
</feature>
<feature type="disulfide bond">
    <location>
        <begin position="9"/>
        <end position="78"/>
    </location>
</feature>
<feature type="disulfide bond">
    <location>
        <begin position="34"/>
        <end position="56"/>
    </location>
</feature>
<feature type="disulfide bond">
    <location>
        <begin position="38"/>
        <end position="44"/>
    </location>
</feature>
<feature type="disulfide bond">
    <location>
        <begin position="82"/>
        <end position="86"/>
    </location>
</feature>
<feature type="disulfide bond">
    <location>
        <begin position="107"/>
        <end position="127"/>
    </location>
</feature>
<feature type="disulfide bond">
    <location>
        <begin position="111"/>
        <end position="117"/>
    </location>
</feature>
<feature type="strand" evidence="6">
    <location>
        <begin position="12"/>
        <end position="14"/>
    </location>
</feature>
<feature type="strand" evidence="6">
    <location>
        <begin position="16"/>
        <end position="18"/>
    </location>
</feature>
<feature type="strand" evidence="6">
    <location>
        <begin position="22"/>
        <end position="27"/>
    </location>
</feature>
<feature type="helix" evidence="6">
    <location>
        <begin position="31"/>
        <end position="40"/>
    </location>
</feature>
<feature type="strand" evidence="6">
    <location>
        <begin position="46"/>
        <end position="50"/>
    </location>
</feature>
<feature type="turn" evidence="6">
    <location>
        <begin position="51"/>
        <end position="53"/>
    </location>
</feature>
<feature type="strand" evidence="6">
    <location>
        <begin position="55"/>
        <end position="59"/>
    </location>
</feature>
<feature type="strand" evidence="6">
    <location>
        <begin position="65"/>
        <end position="67"/>
    </location>
</feature>
<feature type="strand" evidence="6">
    <location>
        <begin position="71"/>
        <end position="76"/>
    </location>
</feature>
<feature type="strand" evidence="6">
    <location>
        <begin position="84"/>
        <end position="87"/>
    </location>
</feature>
<feature type="strand" evidence="6">
    <location>
        <begin position="94"/>
        <end position="98"/>
    </location>
</feature>
<feature type="helix" evidence="6">
    <location>
        <begin position="105"/>
        <end position="112"/>
    </location>
</feature>
<feature type="strand" evidence="6">
    <location>
        <begin position="119"/>
        <end position="121"/>
    </location>
</feature>
<feature type="helix" evidence="6">
    <location>
        <begin position="123"/>
        <end position="125"/>
    </location>
</feature>
<feature type="strand" evidence="6">
    <location>
        <begin position="126"/>
        <end position="130"/>
    </location>
</feature>
<protein>
    <recommendedName>
        <fullName>Microneme antigen L2</fullName>
    </recommendedName>
    <alternativeName>
        <fullName>Lectin SML2</fullName>
    </alternativeName>
</protein>